<reference key="1">
    <citation type="journal article" date="2008" name="J. Bacteriol.">
        <title>The pangenome structure of Escherichia coli: comparative genomic analysis of E. coli commensal and pathogenic isolates.</title>
        <authorList>
            <person name="Rasko D.A."/>
            <person name="Rosovitz M.J."/>
            <person name="Myers G.S.A."/>
            <person name="Mongodin E.F."/>
            <person name="Fricke W.F."/>
            <person name="Gajer P."/>
            <person name="Crabtree J."/>
            <person name="Sebaihia M."/>
            <person name="Thomson N.R."/>
            <person name="Chaudhuri R."/>
            <person name="Henderson I.R."/>
            <person name="Sperandio V."/>
            <person name="Ravel J."/>
        </authorList>
    </citation>
    <scope>NUCLEOTIDE SEQUENCE [LARGE SCALE GENOMIC DNA]</scope>
    <source>
        <strain>HS</strain>
    </source>
</reference>
<organism>
    <name type="scientific">Escherichia coli O9:H4 (strain HS)</name>
    <dbReference type="NCBI Taxonomy" id="331112"/>
    <lineage>
        <taxon>Bacteria</taxon>
        <taxon>Pseudomonadati</taxon>
        <taxon>Pseudomonadota</taxon>
        <taxon>Gammaproteobacteria</taxon>
        <taxon>Enterobacterales</taxon>
        <taxon>Enterobacteriaceae</taxon>
        <taxon>Escherichia</taxon>
    </lineage>
</organism>
<gene>
    <name evidence="1" type="primary">yheU</name>
    <name type="ordered locus">EcHS_A3551</name>
</gene>
<accession>A8A5G2</accession>
<name>YHEU_ECOHS</name>
<evidence type="ECO:0000255" key="1">
    <source>
        <dbReference type="HAMAP-Rule" id="MF_00690"/>
    </source>
</evidence>
<feature type="chain" id="PRO_1000062012" description="UPF0270 protein YheU">
    <location>
        <begin position="1"/>
        <end position="72"/>
    </location>
</feature>
<dbReference type="EMBL" id="CP000802">
    <property type="protein sequence ID" value="ABV07766.1"/>
    <property type="molecule type" value="Genomic_DNA"/>
</dbReference>
<dbReference type="RefSeq" id="WP_000907085.1">
    <property type="nucleotide sequence ID" value="NC_009800.1"/>
</dbReference>
<dbReference type="SMR" id="A8A5G2"/>
<dbReference type="KEGG" id="ecx:EcHS_A3551"/>
<dbReference type="HOGENOM" id="CLU_186759_1_0_6"/>
<dbReference type="Gene3D" id="1.10.10.610">
    <property type="entry name" value="YehU-like"/>
    <property type="match status" value="1"/>
</dbReference>
<dbReference type="HAMAP" id="MF_00690">
    <property type="entry name" value="UPF0270"/>
    <property type="match status" value="1"/>
</dbReference>
<dbReference type="InterPro" id="IPR010648">
    <property type="entry name" value="UPF0270"/>
</dbReference>
<dbReference type="InterPro" id="IPR036685">
    <property type="entry name" value="YehU-like_sf"/>
</dbReference>
<dbReference type="NCBIfam" id="NF003438">
    <property type="entry name" value="PRK04966.1"/>
    <property type="match status" value="1"/>
</dbReference>
<dbReference type="Pfam" id="PF06794">
    <property type="entry name" value="UPF0270"/>
    <property type="match status" value="1"/>
</dbReference>
<dbReference type="PIRSF" id="PIRSF006169">
    <property type="entry name" value="UCP006169"/>
    <property type="match status" value="1"/>
</dbReference>
<dbReference type="SUPFAM" id="SSF118001">
    <property type="entry name" value="YehU-like"/>
    <property type="match status" value="1"/>
</dbReference>
<comment type="similarity">
    <text evidence="1">Belongs to the UPF0270 family.</text>
</comment>
<protein>
    <recommendedName>
        <fullName evidence="1">UPF0270 protein YheU</fullName>
    </recommendedName>
</protein>
<sequence length="72" mass="8470">MLIPWQDLSPETLENLIESFVLREGTDYGEHERTLEQKVADVKRQLQCGEAVLVWSELHETVNIMPRSQFRE</sequence>
<proteinExistence type="inferred from homology"/>